<accession>Q1CZI3</accession>
<sequence>MSTTTPPGQSALPPEAWAPLLRLSRLAGRPLERFLHIEAASGILLLVAAAIALLWANSPWAESYAHFWHTPLGIRVGDFTFERSLEWVVNDGLMAIFFFVVGMEIRREVHQGELSELRRAALPAAAALGGMLVPAGLYLLLADTPDTRSGWGVPMATDIAFAVGILTLLGSRVPPALRVLLLALAVIDDLGAIIVIAVFYSSGVAITGLLVAALGIVGVFAMQRFGVRSKWAYIVPAFVAWAGVYSAGIHPTIAGVIIGLITPVRTWLGPEGFVTGARTELEHIAQAQPGELSSHHLSETLRRVDAARREAMSPSESLIATLHPWVAFGIMPVFALANAGVPISSEPLDAASWTVALATATGLLVGKPLGVIGACWLALRLRLATLPKGLGMRELLVLGSTAGIGFTMALFIAQLAFTETKLLAAGKLGVLAASGAAAVVALVLGRWLLTTSARPGAARSVDEAERSTAL</sequence>
<reference key="1">
    <citation type="journal article" date="2006" name="Proc. Natl. Acad. Sci. U.S.A.">
        <title>Evolution of sensory complexity recorded in a myxobacterial genome.</title>
        <authorList>
            <person name="Goldman B.S."/>
            <person name="Nierman W.C."/>
            <person name="Kaiser D."/>
            <person name="Slater S.C."/>
            <person name="Durkin A.S."/>
            <person name="Eisen J.A."/>
            <person name="Ronning C.M."/>
            <person name="Barbazuk W.B."/>
            <person name="Blanchard M."/>
            <person name="Field C."/>
            <person name="Halling C."/>
            <person name="Hinkle G."/>
            <person name="Iartchuk O."/>
            <person name="Kim H.S."/>
            <person name="Mackenzie C."/>
            <person name="Madupu R."/>
            <person name="Miller N."/>
            <person name="Shvartsbeyn A."/>
            <person name="Sullivan S.A."/>
            <person name="Vaudin M."/>
            <person name="Wiegand R."/>
            <person name="Kaplan H.B."/>
        </authorList>
    </citation>
    <scope>NUCLEOTIDE SEQUENCE [LARGE SCALE GENOMIC DNA]</scope>
    <source>
        <strain>DK1622</strain>
    </source>
</reference>
<comment type="function">
    <text evidence="1">Na(+)/H(+) antiporter that extrudes sodium in exchange for external protons.</text>
</comment>
<comment type="catalytic activity">
    <reaction evidence="1">
        <text>Na(+)(in) + 2 H(+)(out) = Na(+)(out) + 2 H(+)(in)</text>
        <dbReference type="Rhea" id="RHEA:29251"/>
        <dbReference type="ChEBI" id="CHEBI:15378"/>
        <dbReference type="ChEBI" id="CHEBI:29101"/>
    </reaction>
    <physiologicalReaction direction="left-to-right" evidence="1">
        <dbReference type="Rhea" id="RHEA:29252"/>
    </physiologicalReaction>
</comment>
<comment type="subcellular location">
    <subcellularLocation>
        <location evidence="1">Cell inner membrane</location>
        <topology evidence="1">Multi-pass membrane protein</topology>
    </subcellularLocation>
</comment>
<comment type="similarity">
    <text evidence="1">Belongs to the NhaA Na(+)/H(+) (TC 2.A.33) antiporter family.</text>
</comment>
<gene>
    <name evidence="1" type="primary">nhaA2</name>
    <name type="ordered locus">MXAN_6055</name>
</gene>
<name>NHAA2_MYXXD</name>
<organism>
    <name type="scientific">Myxococcus xanthus (strain DK1622)</name>
    <dbReference type="NCBI Taxonomy" id="246197"/>
    <lineage>
        <taxon>Bacteria</taxon>
        <taxon>Pseudomonadati</taxon>
        <taxon>Myxococcota</taxon>
        <taxon>Myxococcia</taxon>
        <taxon>Myxococcales</taxon>
        <taxon>Cystobacterineae</taxon>
        <taxon>Myxococcaceae</taxon>
        <taxon>Myxococcus</taxon>
    </lineage>
</organism>
<protein>
    <recommendedName>
        <fullName evidence="1">Na(+)/H(+) antiporter NhaA 2</fullName>
    </recommendedName>
    <alternativeName>
        <fullName evidence="1">Sodium/proton antiporter NhaA 2</fullName>
    </alternativeName>
</protein>
<dbReference type="EMBL" id="CP000113">
    <property type="protein sequence ID" value="ABF91686.1"/>
    <property type="molecule type" value="Genomic_DNA"/>
</dbReference>
<dbReference type="RefSeq" id="WP_011556004.1">
    <property type="nucleotide sequence ID" value="NC_008095.1"/>
</dbReference>
<dbReference type="SMR" id="Q1CZI3"/>
<dbReference type="STRING" id="246197.MXAN_6055"/>
<dbReference type="EnsemblBacteria" id="ABF91686">
    <property type="protein sequence ID" value="ABF91686"/>
    <property type="gene ID" value="MXAN_6055"/>
</dbReference>
<dbReference type="GeneID" id="41363292"/>
<dbReference type="KEGG" id="mxa:MXAN_6055"/>
<dbReference type="eggNOG" id="COG3004">
    <property type="taxonomic scope" value="Bacteria"/>
</dbReference>
<dbReference type="HOGENOM" id="CLU_015803_1_2_7"/>
<dbReference type="OrthoDB" id="9808135at2"/>
<dbReference type="Proteomes" id="UP000002402">
    <property type="component" value="Chromosome"/>
</dbReference>
<dbReference type="GO" id="GO:0005886">
    <property type="term" value="C:plasma membrane"/>
    <property type="evidence" value="ECO:0007669"/>
    <property type="project" value="UniProtKB-SubCell"/>
</dbReference>
<dbReference type="GO" id="GO:0015385">
    <property type="term" value="F:sodium:proton antiporter activity"/>
    <property type="evidence" value="ECO:0007669"/>
    <property type="project" value="TreeGrafter"/>
</dbReference>
<dbReference type="GO" id="GO:0006885">
    <property type="term" value="P:regulation of pH"/>
    <property type="evidence" value="ECO:0007669"/>
    <property type="project" value="InterPro"/>
</dbReference>
<dbReference type="Gene3D" id="1.20.1530.10">
    <property type="entry name" value="Na+/H+ antiporter like domain"/>
    <property type="match status" value="1"/>
</dbReference>
<dbReference type="HAMAP" id="MF_01844">
    <property type="entry name" value="NhaA"/>
    <property type="match status" value="1"/>
</dbReference>
<dbReference type="InterPro" id="IPR023171">
    <property type="entry name" value="Na/H_antiporter_dom_sf"/>
</dbReference>
<dbReference type="InterPro" id="IPR004670">
    <property type="entry name" value="NhaA"/>
</dbReference>
<dbReference type="NCBIfam" id="TIGR00773">
    <property type="entry name" value="NhaA"/>
    <property type="match status" value="1"/>
</dbReference>
<dbReference type="PANTHER" id="PTHR30341:SF0">
    <property type="entry name" value="NA(+)_H(+) ANTIPORTER NHAA"/>
    <property type="match status" value="1"/>
</dbReference>
<dbReference type="PANTHER" id="PTHR30341">
    <property type="entry name" value="SODIUM ION/PROTON ANTIPORTER NHAA-RELATED"/>
    <property type="match status" value="1"/>
</dbReference>
<dbReference type="Pfam" id="PF06965">
    <property type="entry name" value="Na_H_antiport_1"/>
    <property type="match status" value="1"/>
</dbReference>
<evidence type="ECO:0000255" key="1">
    <source>
        <dbReference type="HAMAP-Rule" id="MF_01844"/>
    </source>
</evidence>
<feature type="chain" id="PRO_0000334344" description="Na(+)/H(+) antiporter NhaA 2">
    <location>
        <begin position="1"/>
        <end position="470"/>
    </location>
</feature>
<feature type="transmembrane region" description="Helical" evidence="1">
    <location>
        <begin position="34"/>
        <end position="54"/>
    </location>
</feature>
<feature type="transmembrane region" description="Helical" evidence="1">
    <location>
        <begin position="85"/>
        <end position="105"/>
    </location>
</feature>
<feature type="transmembrane region" description="Helical" evidence="1">
    <location>
        <begin position="121"/>
        <end position="141"/>
    </location>
</feature>
<feature type="transmembrane region" description="Helical" evidence="1">
    <location>
        <begin position="150"/>
        <end position="170"/>
    </location>
</feature>
<feature type="transmembrane region" description="Helical" evidence="1">
    <location>
        <begin position="179"/>
        <end position="199"/>
    </location>
</feature>
<feature type="transmembrane region" description="Helical" evidence="1">
    <location>
        <begin position="202"/>
        <end position="222"/>
    </location>
</feature>
<feature type="transmembrane region" description="Helical" evidence="1">
    <location>
        <begin position="241"/>
        <end position="261"/>
    </location>
</feature>
<feature type="transmembrane region" description="Helical" evidence="1">
    <location>
        <begin position="317"/>
        <end position="337"/>
    </location>
</feature>
<feature type="transmembrane region" description="Helical" evidence="1">
    <location>
        <begin position="357"/>
        <end position="377"/>
    </location>
</feature>
<feature type="transmembrane region" description="Helical" evidence="1">
    <location>
        <begin position="395"/>
        <end position="415"/>
    </location>
</feature>
<feature type="transmembrane region" description="Helical" evidence="1">
    <location>
        <begin position="423"/>
        <end position="443"/>
    </location>
</feature>
<keyword id="KW-0050">Antiport</keyword>
<keyword id="KW-0997">Cell inner membrane</keyword>
<keyword id="KW-1003">Cell membrane</keyword>
<keyword id="KW-0406">Ion transport</keyword>
<keyword id="KW-0472">Membrane</keyword>
<keyword id="KW-1185">Reference proteome</keyword>
<keyword id="KW-0915">Sodium</keyword>
<keyword id="KW-0739">Sodium transport</keyword>
<keyword id="KW-0812">Transmembrane</keyword>
<keyword id="KW-1133">Transmembrane helix</keyword>
<keyword id="KW-0813">Transport</keyword>
<proteinExistence type="inferred from homology"/>